<protein>
    <recommendedName>
        <fullName evidence="1">Cyanate hydratase</fullName>
        <shortName evidence="1">Cyanase</shortName>
        <ecNumber evidence="1">4.2.1.104</ecNumber>
    </recommendedName>
    <alternativeName>
        <fullName evidence="1">Cyanate hydrolase</fullName>
    </alternativeName>
    <alternativeName>
        <fullName evidence="1">Cyanate lyase</fullName>
    </alternativeName>
</protein>
<name>CYNS_ASPFN</name>
<organism>
    <name type="scientific">Aspergillus flavus (strain ATCC 200026 / FGSC A1120 / IAM 13836 / NRRL 3357 / JCM 12722 / SRRC 167)</name>
    <dbReference type="NCBI Taxonomy" id="332952"/>
    <lineage>
        <taxon>Eukaryota</taxon>
        <taxon>Fungi</taxon>
        <taxon>Dikarya</taxon>
        <taxon>Ascomycota</taxon>
        <taxon>Pezizomycotina</taxon>
        <taxon>Eurotiomycetes</taxon>
        <taxon>Eurotiomycetidae</taxon>
        <taxon>Eurotiales</taxon>
        <taxon>Aspergillaceae</taxon>
        <taxon>Aspergillus</taxon>
        <taxon>Aspergillus subgen. Circumdati</taxon>
    </lineage>
</organism>
<comment type="function">
    <text evidence="1">Catalyzes the reaction of cyanate with bicarbonate to produce ammonia and carbon dioxide.</text>
</comment>
<comment type="catalytic activity">
    <reaction evidence="1">
        <text>cyanate + hydrogencarbonate + 3 H(+) = NH4(+) + 2 CO2</text>
        <dbReference type="Rhea" id="RHEA:11120"/>
        <dbReference type="ChEBI" id="CHEBI:15378"/>
        <dbReference type="ChEBI" id="CHEBI:16526"/>
        <dbReference type="ChEBI" id="CHEBI:17544"/>
        <dbReference type="ChEBI" id="CHEBI:28938"/>
        <dbReference type="ChEBI" id="CHEBI:29195"/>
        <dbReference type="EC" id="4.2.1.104"/>
    </reaction>
</comment>
<comment type="similarity">
    <text evidence="1">Belongs to the cyanase family.</text>
</comment>
<reference key="1">
    <citation type="journal article" date="2015" name="Genome Announc.">
        <title>Genome sequence of Aspergillus flavus NRRL 3357, a strain that causes aflatoxin contamination of food and feed.</title>
        <authorList>
            <person name="Nierman W.C."/>
            <person name="Yu J."/>
            <person name="Fedorova-Abrams N.D."/>
            <person name="Losada L."/>
            <person name="Cleveland T.E."/>
            <person name="Bhatnagar D."/>
            <person name="Bennett J.W."/>
            <person name="Dean R."/>
            <person name="Payne G.A."/>
        </authorList>
    </citation>
    <scope>NUCLEOTIDE SEQUENCE [LARGE SCALE GENOMIC DNA]</scope>
    <source>
        <strain>ATCC 200026 / FGSC A1120 / IAM 13836 / NRRL 3357 / JCM 12722 / SRRC 167</strain>
    </source>
</reference>
<proteinExistence type="inferred from homology"/>
<feature type="chain" id="PRO_0000403240" description="Cyanate hydratase">
    <location>
        <begin position="1"/>
        <end position="160"/>
    </location>
</feature>
<feature type="active site" evidence="1">
    <location>
        <position position="100"/>
    </location>
</feature>
<feature type="active site" evidence="1">
    <location>
        <position position="103"/>
    </location>
</feature>
<feature type="active site" evidence="1">
    <location>
        <position position="126"/>
    </location>
</feature>
<dbReference type="EC" id="4.2.1.104" evidence="1"/>
<dbReference type="EMBL" id="EQ963482">
    <property type="protein sequence ID" value="EED47670.1"/>
    <property type="molecule type" value="Genomic_DNA"/>
</dbReference>
<dbReference type="RefSeq" id="XP_002382512.1">
    <property type="nucleotide sequence ID" value="XM_002382471.1"/>
</dbReference>
<dbReference type="SMR" id="B8NQ08"/>
<dbReference type="STRING" id="332952.B8NQ08"/>
<dbReference type="EnsemblFungi" id="EED47670">
    <property type="protein sequence ID" value="EED47670"/>
    <property type="gene ID" value="AFLA_003110"/>
</dbReference>
<dbReference type="VEuPathDB" id="FungiDB:AFLA_011640"/>
<dbReference type="eggNOG" id="ENOG502S3YJ">
    <property type="taxonomic scope" value="Eukaryota"/>
</dbReference>
<dbReference type="HOGENOM" id="CLU_103452_0_0_1"/>
<dbReference type="OMA" id="YELVMIN"/>
<dbReference type="GO" id="GO:0008824">
    <property type="term" value="F:cyanate hydratase activity"/>
    <property type="evidence" value="ECO:0007669"/>
    <property type="project" value="UniProtKB-UniRule"/>
</dbReference>
<dbReference type="GO" id="GO:0003677">
    <property type="term" value="F:DNA binding"/>
    <property type="evidence" value="ECO:0007669"/>
    <property type="project" value="InterPro"/>
</dbReference>
<dbReference type="GO" id="GO:0009439">
    <property type="term" value="P:cyanate metabolic process"/>
    <property type="evidence" value="ECO:0007669"/>
    <property type="project" value="UniProtKB-UniRule"/>
</dbReference>
<dbReference type="CDD" id="cd00559">
    <property type="entry name" value="Cyanase_C"/>
    <property type="match status" value="1"/>
</dbReference>
<dbReference type="Gene3D" id="3.30.1160.10">
    <property type="entry name" value="Cyanate lyase, C-terminal domain"/>
    <property type="match status" value="1"/>
</dbReference>
<dbReference type="Gene3D" id="1.10.260.40">
    <property type="entry name" value="lambda repressor-like DNA-binding domains"/>
    <property type="match status" value="1"/>
</dbReference>
<dbReference type="HAMAP" id="MF_00535">
    <property type="entry name" value="Cyanate_hydrat"/>
    <property type="match status" value="1"/>
</dbReference>
<dbReference type="InterPro" id="IPR008076">
    <property type="entry name" value="Cyanase"/>
</dbReference>
<dbReference type="InterPro" id="IPR003712">
    <property type="entry name" value="Cyanate_lyase_C"/>
</dbReference>
<dbReference type="InterPro" id="IPR036581">
    <property type="entry name" value="Cyanate_lyase_C_sf"/>
</dbReference>
<dbReference type="InterPro" id="IPR010982">
    <property type="entry name" value="Lambda_DNA-bd_dom_sf"/>
</dbReference>
<dbReference type="NCBIfam" id="TIGR00673">
    <property type="entry name" value="cynS"/>
    <property type="match status" value="1"/>
</dbReference>
<dbReference type="PANTHER" id="PTHR34186">
    <property type="entry name" value="CYANATE HYDRATASE"/>
    <property type="match status" value="1"/>
</dbReference>
<dbReference type="PANTHER" id="PTHR34186:SF2">
    <property type="entry name" value="CYANATE HYDRATASE"/>
    <property type="match status" value="1"/>
</dbReference>
<dbReference type="Pfam" id="PF02560">
    <property type="entry name" value="Cyanate_lyase"/>
    <property type="match status" value="1"/>
</dbReference>
<dbReference type="PIRSF" id="PIRSF001263">
    <property type="entry name" value="Cyanate_hydratas"/>
    <property type="match status" value="1"/>
</dbReference>
<dbReference type="PRINTS" id="PR01693">
    <property type="entry name" value="CYANASE"/>
</dbReference>
<dbReference type="SMART" id="SM01116">
    <property type="entry name" value="Cyanate_lyase"/>
    <property type="match status" value="1"/>
</dbReference>
<dbReference type="SUPFAM" id="SSF55234">
    <property type="entry name" value="Cyanase C-terminal domain"/>
    <property type="match status" value="1"/>
</dbReference>
<dbReference type="SUPFAM" id="SSF47413">
    <property type="entry name" value="lambda repressor-like DNA-binding domains"/>
    <property type="match status" value="1"/>
</dbReference>
<gene>
    <name evidence="1" type="primary">cyn1</name>
    <name type="ORF">AFLA_003110</name>
</gene>
<keyword id="KW-0456">Lyase</keyword>
<accession>B8NQ08</accession>
<evidence type="ECO:0000255" key="1">
    <source>
        <dbReference type="HAMAP-Rule" id="MF_03139"/>
    </source>
</evidence>
<sequence>MSLATLDTSQHPNLPSASATLFKAKAAKKFSFEQIAQHIGRNEVATAAIFYGQAKASPEDITNLASLLEIPQEVLEDQLSGFPDRGKSVEMPPKEPLIYRLYEIVQNYGYAYKAVLNEKFGDGIMSAISFSTKVEKETDADGNNWAVITLRGKWLPFSRF</sequence>